<comment type="function">
    <text evidence="1">Transcription elongation factor implicated in the maintenance of proper chromatin structure in actively transcribed regions.</text>
</comment>
<comment type="subcellular location">
    <subcellularLocation>
        <location evidence="1">Nucleus</location>
    </subcellularLocation>
</comment>
<comment type="similarity">
    <text evidence="3">Belongs to the ELOF1 family.</text>
</comment>
<reference key="1">
    <citation type="journal article" date="2000" name="Science">
        <title>The genome sequence of Drosophila melanogaster.</title>
        <authorList>
            <person name="Adams M.D."/>
            <person name="Celniker S.E."/>
            <person name="Holt R.A."/>
            <person name="Evans C.A."/>
            <person name="Gocayne J.D."/>
            <person name="Amanatides P.G."/>
            <person name="Scherer S.E."/>
            <person name="Li P.W."/>
            <person name="Hoskins R.A."/>
            <person name="Galle R.F."/>
            <person name="George R.A."/>
            <person name="Lewis S.E."/>
            <person name="Richards S."/>
            <person name="Ashburner M."/>
            <person name="Henderson S.N."/>
            <person name="Sutton G.G."/>
            <person name="Wortman J.R."/>
            <person name="Yandell M.D."/>
            <person name="Zhang Q."/>
            <person name="Chen L.X."/>
            <person name="Brandon R.C."/>
            <person name="Rogers Y.-H.C."/>
            <person name="Blazej R.G."/>
            <person name="Champe M."/>
            <person name="Pfeiffer B.D."/>
            <person name="Wan K.H."/>
            <person name="Doyle C."/>
            <person name="Baxter E.G."/>
            <person name="Helt G."/>
            <person name="Nelson C.R."/>
            <person name="Miklos G.L.G."/>
            <person name="Abril J.F."/>
            <person name="Agbayani A."/>
            <person name="An H.-J."/>
            <person name="Andrews-Pfannkoch C."/>
            <person name="Baldwin D."/>
            <person name="Ballew R.M."/>
            <person name="Basu A."/>
            <person name="Baxendale J."/>
            <person name="Bayraktaroglu L."/>
            <person name="Beasley E.M."/>
            <person name="Beeson K.Y."/>
            <person name="Benos P.V."/>
            <person name="Berman B.P."/>
            <person name="Bhandari D."/>
            <person name="Bolshakov S."/>
            <person name="Borkova D."/>
            <person name="Botchan M.R."/>
            <person name="Bouck J."/>
            <person name="Brokstein P."/>
            <person name="Brottier P."/>
            <person name="Burtis K.C."/>
            <person name="Busam D.A."/>
            <person name="Butler H."/>
            <person name="Cadieu E."/>
            <person name="Center A."/>
            <person name="Chandra I."/>
            <person name="Cherry J.M."/>
            <person name="Cawley S."/>
            <person name="Dahlke C."/>
            <person name="Davenport L.B."/>
            <person name="Davies P."/>
            <person name="de Pablos B."/>
            <person name="Delcher A."/>
            <person name="Deng Z."/>
            <person name="Mays A.D."/>
            <person name="Dew I."/>
            <person name="Dietz S.M."/>
            <person name="Dodson K."/>
            <person name="Doup L.E."/>
            <person name="Downes M."/>
            <person name="Dugan-Rocha S."/>
            <person name="Dunkov B.C."/>
            <person name="Dunn P."/>
            <person name="Durbin K.J."/>
            <person name="Evangelista C.C."/>
            <person name="Ferraz C."/>
            <person name="Ferriera S."/>
            <person name="Fleischmann W."/>
            <person name="Fosler C."/>
            <person name="Gabrielian A.E."/>
            <person name="Garg N.S."/>
            <person name="Gelbart W.M."/>
            <person name="Glasser K."/>
            <person name="Glodek A."/>
            <person name="Gong F."/>
            <person name="Gorrell J.H."/>
            <person name="Gu Z."/>
            <person name="Guan P."/>
            <person name="Harris M."/>
            <person name="Harris N.L."/>
            <person name="Harvey D.A."/>
            <person name="Heiman T.J."/>
            <person name="Hernandez J.R."/>
            <person name="Houck J."/>
            <person name="Hostin D."/>
            <person name="Houston K.A."/>
            <person name="Howland T.J."/>
            <person name="Wei M.-H."/>
            <person name="Ibegwam C."/>
            <person name="Jalali M."/>
            <person name="Kalush F."/>
            <person name="Karpen G.H."/>
            <person name="Ke Z."/>
            <person name="Kennison J.A."/>
            <person name="Ketchum K.A."/>
            <person name="Kimmel B.E."/>
            <person name="Kodira C.D."/>
            <person name="Kraft C.L."/>
            <person name="Kravitz S."/>
            <person name="Kulp D."/>
            <person name="Lai Z."/>
            <person name="Lasko P."/>
            <person name="Lei Y."/>
            <person name="Levitsky A.A."/>
            <person name="Li J.H."/>
            <person name="Li Z."/>
            <person name="Liang Y."/>
            <person name="Lin X."/>
            <person name="Liu X."/>
            <person name="Mattei B."/>
            <person name="McIntosh T.C."/>
            <person name="McLeod M.P."/>
            <person name="McPherson D."/>
            <person name="Merkulov G."/>
            <person name="Milshina N.V."/>
            <person name="Mobarry C."/>
            <person name="Morris J."/>
            <person name="Moshrefi A."/>
            <person name="Mount S.M."/>
            <person name="Moy M."/>
            <person name="Murphy B."/>
            <person name="Murphy L."/>
            <person name="Muzny D.M."/>
            <person name="Nelson D.L."/>
            <person name="Nelson D.R."/>
            <person name="Nelson K.A."/>
            <person name="Nixon K."/>
            <person name="Nusskern D.R."/>
            <person name="Pacleb J.M."/>
            <person name="Palazzolo M."/>
            <person name="Pittman G.S."/>
            <person name="Pan S."/>
            <person name="Pollard J."/>
            <person name="Puri V."/>
            <person name="Reese M.G."/>
            <person name="Reinert K."/>
            <person name="Remington K."/>
            <person name="Saunders R.D.C."/>
            <person name="Scheeler F."/>
            <person name="Shen H."/>
            <person name="Shue B.C."/>
            <person name="Siden-Kiamos I."/>
            <person name="Simpson M."/>
            <person name="Skupski M.P."/>
            <person name="Smith T.J."/>
            <person name="Spier E."/>
            <person name="Spradling A.C."/>
            <person name="Stapleton M."/>
            <person name="Strong R."/>
            <person name="Sun E."/>
            <person name="Svirskas R."/>
            <person name="Tector C."/>
            <person name="Turner R."/>
            <person name="Venter E."/>
            <person name="Wang A.H."/>
            <person name="Wang X."/>
            <person name="Wang Z.-Y."/>
            <person name="Wassarman D.A."/>
            <person name="Weinstock G.M."/>
            <person name="Weissenbach J."/>
            <person name="Williams S.M."/>
            <person name="Woodage T."/>
            <person name="Worley K.C."/>
            <person name="Wu D."/>
            <person name="Yang S."/>
            <person name="Yao Q.A."/>
            <person name="Ye J."/>
            <person name="Yeh R.-F."/>
            <person name="Zaveri J.S."/>
            <person name="Zhan M."/>
            <person name="Zhang G."/>
            <person name="Zhao Q."/>
            <person name="Zheng L."/>
            <person name="Zheng X.H."/>
            <person name="Zhong F.N."/>
            <person name="Zhong W."/>
            <person name="Zhou X."/>
            <person name="Zhu S.C."/>
            <person name="Zhu X."/>
            <person name="Smith H.O."/>
            <person name="Gibbs R.A."/>
            <person name="Myers E.W."/>
            <person name="Rubin G.M."/>
            <person name="Venter J.C."/>
        </authorList>
    </citation>
    <scope>NUCLEOTIDE SEQUENCE [LARGE SCALE GENOMIC DNA]</scope>
    <source>
        <strain>Berkeley</strain>
    </source>
</reference>
<reference key="2">
    <citation type="journal article" date="2002" name="Genome Biol.">
        <title>Annotation of the Drosophila melanogaster euchromatic genome: a systematic review.</title>
        <authorList>
            <person name="Misra S."/>
            <person name="Crosby M.A."/>
            <person name="Mungall C.J."/>
            <person name="Matthews B.B."/>
            <person name="Campbell K.S."/>
            <person name="Hradecky P."/>
            <person name="Huang Y."/>
            <person name="Kaminker J.S."/>
            <person name="Millburn G.H."/>
            <person name="Prochnik S.E."/>
            <person name="Smith C.D."/>
            <person name="Tupy J.L."/>
            <person name="Whitfield E.J."/>
            <person name="Bayraktaroglu L."/>
            <person name="Berman B.P."/>
            <person name="Bettencourt B.R."/>
            <person name="Celniker S.E."/>
            <person name="de Grey A.D.N.J."/>
            <person name="Drysdale R.A."/>
            <person name="Harris N.L."/>
            <person name="Richter J."/>
            <person name="Russo S."/>
            <person name="Schroeder A.J."/>
            <person name="Shu S.Q."/>
            <person name="Stapleton M."/>
            <person name="Yamada C."/>
            <person name="Ashburner M."/>
            <person name="Gelbart W.M."/>
            <person name="Rubin G.M."/>
            <person name="Lewis S.E."/>
        </authorList>
    </citation>
    <scope>GENOME REANNOTATION</scope>
    <source>
        <strain>Berkeley</strain>
    </source>
</reference>
<reference key="3">
    <citation type="journal article" date="2002" name="Genome Biol.">
        <title>A Drosophila full-length cDNA resource.</title>
        <authorList>
            <person name="Stapleton M."/>
            <person name="Carlson J.W."/>
            <person name="Brokstein P."/>
            <person name="Yu C."/>
            <person name="Champe M."/>
            <person name="George R.A."/>
            <person name="Guarin H."/>
            <person name="Kronmiller B."/>
            <person name="Pacleb J.M."/>
            <person name="Park S."/>
            <person name="Wan K.H."/>
            <person name="Rubin G.M."/>
            <person name="Celniker S.E."/>
        </authorList>
    </citation>
    <scope>NUCLEOTIDE SEQUENCE [LARGE SCALE MRNA]</scope>
    <source>
        <strain>Berkeley</strain>
        <tissue>Embryo</tissue>
    </source>
</reference>
<organism>
    <name type="scientific">Drosophila melanogaster</name>
    <name type="common">Fruit fly</name>
    <dbReference type="NCBI Taxonomy" id="7227"/>
    <lineage>
        <taxon>Eukaryota</taxon>
        <taxon>Metazoa</taxon>
        <taxon>Ecdysozoa</taxon>
        <taxon>Arthropoda</taxon>
        <taxon>Hexapoda</taxon>
        <taxon>Insecta</taxon>
        <taxon>Pterygota</taxon>
        <taxon>Neoptera</taxon>
        <taxon>Endopterygota</taxon>
        <taxon>Diptera</taxon>
        <taxon>Brachycera</taxon>
        <taxon>Muscomorpha</taxon>
        <taxon>Ephydroidea</taxon>
        <taxon>Drosophilidae</taxon>
        <taxon>Drosophila</taxon>
        <taxon>Sophophora</taxon>
    </lineage>
</organism>
<feature type="chain" id="PRO_0000120944" description="Transcription elongation factor 1 homolog">
    <location>
        <begin position="1"/>
        <end position="82"/>
    </location>
</feature>
<feature type="binding site" evidence="2">
    <location>
        <position position="26"/>
    </location>
    <ligand>
        <name>Zn(2+)</name>
        <dbReference type="ChEBI" id="CHEBI:29105"/>
    </ligand>
</feature>
<feature type="binding site" evidence="2">
    <location>
        <position position="29"/>
    </location>
    <ligand>
        <name>Zn(2+)</name>
        <dbReference type="ChEBI" id="CHEBI:29105"/>
    </ligand>
</feature>
<feature type="binding site" evidence="2">
    <location>
        <position position="50"/>
    </location>
    <ligand>
        <name>Zn(2+)</name>
        <dbReference type="ChEBI" id="CHEBI:29105"/>
    </ligand>
</feature>
<feature type="binding site" evidence="2">
    <location>
        <position position="53"/>
    </location>
    <ligand>
        <name>Zn(2+)</name>
        <dbReference type="ChEBI" id="CHEBI:29105"/>
    </ligand>
</feature>
<accession>Q8MQI6</accession>
<accession>A8Y556</accession>
<accession>A8Y557</accession>
<accession>Q7PL43</accession>
<name>ELOF1_DROME</name>
<proteinExistence type="inferred from homology"/>
<sequence>MGRRKSKRKPPPKRKNIEPLDQQFNCPFCNHEKSCEVKMDKSRNTAKITCRVCLEDFQTGINFLSEPIDVYNDWVDACETAN</sequence>
<keyword id="KW-0479">Metal-binding</keyword>
<keyword id="KW-0539">Nucleus</keyword>
<keyword id="KW-1185">Reference proteome</keyword>
<keyword id="KW-0804">Transcription</keyword>
<keyword id="KW-0805">Transcription regulation</keyword>
<keyword id="KW-0862">Zinc</keyword>
<keyword id="KW-0863">Zinc-finger</keyword>
<gene>
    <name type="ORF">CG40228</name>
</gene>
<evidence type="ECO:0000250" key="1"/>
<evidence type="ECO:0000250" key="2">
    <source>
        <dbReference type="UniProtKB" id="P60003"/>
    </source>
</evidence>
<evidence type="ECO:0000305" key="3"/>
<dbReference type="EMBL" id="AE014296">
    <property type="protein sequence ID" value="EDP28091.1"/>
    <property type="molecule type" value="Genomic_DNA"/>
</dbReference>
<dbReference type="EMBL" id="AY129458">
    <property type="protein sequence ID" value="AAM76200.1"/>
    <property type="molecule type" value="mRNA"/>
</dbReference>
<dbReference type="RefSeq" id="NP_001104426.1">
    <property type="nucleotide sequence ID" value="NM_001110956.3"/>
</dbReference>
<dbReference type="RefSeq" id="NP_001263166.1">
    <property type="nucleotide sequence ID" value="NM_001276237.1"/>
</dbReference>
<dbReference type="SMR" id="Q8MQI6"/>
<dbReference type="BioGRID" id="625295">
    <property type="interactions" value="3"/>
</dbReference>
<dbReference type="DIP" id="DIP-21728N"/>
<dbReference type="FunCoup" id="Q8MQI6">
    <property type="interactions" value="1441"/>
</dbReference>
<dbReference type="IntAct" id="Q8MQI6">
    <property type="interactions" value="3"/>
</dbReference>
<dbReference type="STRING" id="7227.FBpp0112564"/>
<dbReference type="PaxDb" id="7227-FBpp0112564"/>
<dbReference type="DNASU" id="5740664"/>
<dbReference type="EnsemblMetazoa" id="FBtr0113841">
    <property type="protein sequence ID" value="FBpp0112564"/>
    <property type="gene ID" value="FBgn0063670"/>
</dbReference>
<dbReference type="EnsemblMetazoa" id="FBtr0333870">
    <property type="protein sequence ID" value="FBpp0306002"/>
    <property type="gene ID" value="FBgn0063670"/>
</dbReference>
<dbReference type="GeneID" id="5740664"/>
<dbReference type="KEGG" id="dme:Dmel_CG40228"/>
<dbReference type="UCSC" id="CG40228-RB">
    <property type="organism name" value="d. melanogaster"/>
</dbReference>
<dbReference type="AGR" id="FB:FBgn0063670"/>
<dbReference type="FlyBase" id="FBgn0063670">
    <property type="gene designation" value="CG40228"/>
</dbReference>
<dbReference type="VEuPathDB" id="VectorBase:FBgn0063670"/>
<dbReference type="eggNOG" id="KOG3214">
    <property type="taxonomic scope" value="Eukaryota"/>
</dbReference>
<dbReference type="GeneTree" id="ENSGT00390000000053"/>
<dbReference type="InParanoid" id="Q8MQI6"/>
<dbReference type="OMA" id="CLDANKK"/>
<dbReference type="OrthoDB" id="445983at2759"/>
<dbReference type="PhylomeDB" id="Q8MQI6"/>
<dbReference type="BioGRID-ORCS" id="5740664">
    <property type="hits" value="0 hits in 1 CRISPR screen"/>
</dbReference>
<dbReference type="GenomeRNAi" id="5740664"/>
<dbReference type="PRO" id="PR:Q8MQI6"/>
<dbReference type="Proteomes" id="UP000000803">
    <property type="component" value="Chromosome 3L"/>
</dbReference>
<dbReference type="Bgee" id="FBgn0063670">
    <property type="expression patterns" value="Expressed in wing disc and 255 other cell types or tissues"/>
</dbReference>
<dbReference type="ExpressionAtlas" id="Q8MQI6">
    <property type="expression patterns" value="baseline and differential"/>
</dbReference>
<dbReference type="GO" id="GO:0008023">
    <property type="term" value="C:transcription elongation factor complex"/>
    <property type="evidence" value="ECO:0000318"/>
    <property type="project" value="GO_Central"/>
</dbReference>
<dbReference type="GO" id="GO:0000993">
    <property type="term" value="F:RNA polymerase II complex binding"/>
    <property type="evidence" value="ECO:0000318"/>
    <property type="project" value="GO_Central"/>
</dbReference>
<dbReference type="GO" id="GO:0008270">
    <property type="term" value="F:zinc ion binding"/>
    <property type="evidence" value="ECO:0007669"/>
    <property type="project" value="UniProtKB-KW"/>
</dbReference>
<dbReference type="GO" id="GO:0006368">
    <property type="term" value="P:transcription elongation by RNA polymerase II"/>
    <property type="evidence" value="ECO:0000318"/>
    <property type="project" value="GO_Central"/>
</dbReference>
<dbReference type="FunFam" id="2.20.25.190:FF:000002">
    <property type="entry name" value="Transcription elongation factor 1 homolog"/>
    <property type="match status" value="1"/>
</dbReference>
<dbReference type="Gene3D" id="2.20.25.190">
    <property type="match status" value="1"/>
</dbReference>
<dbReference type="InterPro" id="IPR007808">
    <property type="entry name" value="Elf1"/>
</dbReference>
<dbReference type="InterPro" id="IPR038567">
    <property type="entry name" value="T_Elf1_sf"/>
</dbReference>
<dbReference type="PANTHER" id="PTHR20934">
    <property type="entry name" value="TRANSCRIPTION ELONGATION FACTOR 1 HOMOLOG"/>
    <property type="match status" value="1"/>
</dbReference>
<dbReference type="PANTHER" id="PTHR20934:SF0">
    <property type="entry name" value="TRANSCRIPTION ELONGATION FACTOR 1 HOMOLOG"/>
    <property type="match status" value="1"/>
</dbReference>
<dbReference type="Pfam" id="PF05129">
    <property type="entry name" value="Zn_ribbon_Elf1"/>
    <property type="match status" value="1"/>
</dbReference>
<dbReference type="SUPFAM" id="SSF57783">
    <property type="entry name" value="Zinc beta-ribbon"/>
    <property type="match status" value="1"/>
</dbReference>
<protein>
    <recommendedName>
        <fullName>Transcription elongation factor 1 homolog</fullName>
    </recommendedName>
</protein>